<organism>
    <name type="scientific">Leifsonia xyli subsp. xyli (strain CTCB07)</name>
    <dbReference type="NCBI Taxonomy" id="281090"/>
    <lineage>
        <taxon>Bacteria</taxon>
        <taxon>Bacillati</taxon>
        <taxon>Actinomycetota</taxon>
        <taxon>Actinomycetes</taxon>
        <taxon>Micrococcales</taxon>
        <taxon>Microbacteriaceae</taxon>
        <taxon>Leifsonia</taxon>
    </lineage>
</organism>
<gene>
    <name evidence="1" type="primary">panC</name>
    <name type="ordered locus">Lxx21410</name>
</gene>
<dbReference type="EC" id="6.3.2.1" evidence="1"/>
<dbReference type="EMBL" id="AE016822">
    <property type="protein sequence ID" value="AAT89835.1"/>
    <property type="molecule type" value="Genomic_DNA"/>
</dbReference>
<dbReference type="SMR" id="Q6ACQ8"/>
<dbReference type="STRING" id="281090.Lxx21410"/>
<dbReference type="KEGG" id="lxx:Lxx21410"/>
<dbReference type="eggNOG" id="COG0414">
    <property type="taxonomic scope" value="Bacteria"/>
</dbReference>
<dbReference type="HOGENOM" id="CLU_047148_0_2_11"/>
<dbReference type="UniPathway" id="UPA00028">
    <property type="reaction ID" value="UER00005"/>
</dbReference>
<dbReference type="Proteomes" id="UP000001306">
    <property type="component" value="Chromosome"/>
</dbReference>
<dbReference type="GO" id="GO:0005829">
    <property type="term" value="C:cytosol"/>
    <property type="evidence" value="ECO:0007669"/>
    <property type="project" value="TreeGrafter"/>
</dbReference>
<dbReference type="GO" id="GO:0005524">
    <property type="term" value="F:ATP binding"/>
    <property type="evidence" value="ECO:0007669"/>
    <property type="project" value="UniProtKB-KW"/>
</dbReference>
<dbReference type="GO" id="GO:0004592">
    <property type="term" value="F:pantoate-beta-alanine ligase activity"/>
    <property type="evidence" value="ECO:0007669"/>
    <property type="project" value="UniProtKB-UniRule"/>
</dbReference>
<dbReference type="GO" id="GO:0015940">
    <property type="term" value="P:pantothenate biosynthetic process"/>
    <property type="evidence" value="ECO:0007669"/>
    <property type="project" value="UniProtKB-UniRule"/>
</dbReference>
<dbReference type="CDD" id="cd00560">
    <property type="entry name" value="PanC"/>
    <property type="match status" value="1"/>
</dbReference>
<dbReference type="Gene3D" id="3.40.50.620">
    <property type="entry name" value="HUPs"/>
    <property type="match status" value="1"/>
</dbReference>
<dbReference type="Gene3D" id="3.30.1300.10">
    <property type="entry name" value="Pantoate-beta-alanine ligase, C-terminal domain"/>
    <property type="match status" value="1"/>
</dbReference>
<dbReference type="HAMAP" id="MF_00158">
    <property type="entry name" value="PanC"/>
    <property type="match status" value="1"/>
</dbReference>
<dbReference type="InterPro" id="IPR004821">
    <property type="entry name" value="Cyt_trans-like"/>
</dbReference>
<dbReference type="InterPro" id="IPR003721">
    <property type="entry name" value="Pantoate_ligase"/>
</dbReference>
<dbReference type="InterPro" id="IPR042176">
    <property type="entry name" value="Pantoate_ligase_C"/>
</dbReference>
<dbReference type="InterPro" id="IPR014729">
    <property type="entry name" value="Rossmann-like_a/b/a_fold"/>
</dbReference>
<dbReference type="NCBIfam" id="TIGR00125">
    <property type="entry name" value="cyt_tran_rel"/>
    <property type="match status" value="1"/>
</dbReference>
<dbReference type="NCBIfam" id="TIGR00018">
    <property type="entry name" value="panC"/>
    <property type="match status" value="1"/>
</dbReference>
<dbReference type="PANTHER" id="PTHR21299">
    <property type="entry name" value="CYTIDYLATE KINASE/PANTOATE-BETA-ALANINE LIGASE"/>
    <property type="match status" value="1"/>
</dbReference>
<dbReference type="PANTHER" id="PTHR21299:SF1">
    <property type="entry name" value="PANTOATE--BETA-ALANINE LIGASE"/>
    <property type="match status" value="1"/>
</dbReference>
<dbReference type="Pfam" id="PF02569">
    <property type="entry name" value="Pantoate_ligase"/>
    <property type="match status" value="1"/>
</dbReference>
<dbReference type="SUPFAM" id="SSF52374">
    <property type="entry name" value="Nucleotidylyl transferase"/>
    <property type="match status" value="1"/>
</dbReference>
<keyword id="KW-0067">ATP-binding</keyword>
<keyword id="KW-0963">Cytoplasm</keyword>
<keyword id="KW-0436">Ligase</keyword>
<keyword id="KW-0547">Nucleotide-binding</keyword>
<keyword id="KW-0566">Pantothenate biosynthesis</keyword>
<keyword id="KW-1185">Reference proteome</keyword>
<accession>Q6ACQ8</accession>
<name>PANC_LEIXX</name>
<sequence length="287" mass="30061">MTVIACLREILSTARRTAVAEGASDAPASRVVLVPTMGALHEGHVRLVNHARDLGGIVVVSIFVNPLQFGPGEDLDRYPRTLDADVALLDGLADVVFAPAAAEMYPQGESSTRVTAGAVGGLFEGASRPGHFDGMLTVVAKLFGIAQPDVAVFGQKDAQQVHLVGRMVDDLNLPVTIAVVDTVREPDGLALSSRNRYLDADARAAAATLSRALADGVAACAGGAAAVLTAARVRVEAEPVVRLDYLVIVDQGTFREVAPNYHGPAFLLIAARVGSTRLIDNERITLP</sequence>
<feature type="chain" id="PRO_0000305471" description="Pantothenate synthetase">
    <location>
        <begin position="1"/>
        <end position="287"/>
    </location>
</feature>
<feature type="active site" description="Proton donor" evidence="1">
    <location>
        <position position="44"/>
    </location>
</feature>
<feature type="binding site" evidence="1">
    <location>
        <begin position="37"/>
        <end position="44"/>
    </location>
    <ligand>
        <name>ATP</name>
        <dbReference type="ChEBI" id="CHEBI:30616"/>
    </ligand>
</feature>
<feature type="binding site" evidence="1">
    <location>
        <position position="68"/>
    </location>
    <ligand>
        <name>(R)-pantoate</name>
        <dbReference type="ChEBI" id="CHEBI:15980"/>
    </ligand>
</feature>
<feature type="binding site" evidence="1">
    <location>
        <position position="68"/>
    </location>
    <ligand>
        <name>beta-alanine</name>
        <dbReference type="ChEBI" id="CHEBI:57966"/>
    </ligand>
</feature>
<feature type="binding site" evidence="1">
    <location>
        <begin position="154"/>
        <end position="157"/>
    </location>
    <ligand>
        <name>ATP</name>
        <dbReference type="ChEBI" id="CHEBI:30616"/>
    </ligand>
</feature>
<feature type="binding site" evidence="1">
    <location>
        <position position="160"/>
    </location>
    <ligand>
        <name>(R)-pantoate</name>
        <dbReference type="ChEBI" id="CHEBI:15980"/>
    </ligand>
</feature>
<feature type="binding site" evidence="1">
    <location>
        <position position="183"/>
    </location>
    <ligand>
        <name>ATP</name>
        <dbReference type="ChEBI" id="CHEBI:30616"/>
    </ligand>
</feature>
<feature type="binding site" evidence="1">
    <location>
        <begin position="191"/>
        <end position="194"/>
    </location>
    <ligand>
        <name>ATP</name>
        <dbReference type="ChEBI" id="CHEBI:30616"/>
    </ligand>
</feature>
<reference key="1">
    <citation type="journal article" date="2004" name="Mol. Plant Microbe Interact.">
        <title>The genome sequence of the Gram-positive sugarcane pathogen Leifsonia xyli subsp. xyli.</title>
        <authorList>
            <person name="Monteiro-Vitorello C.B."/>
            <person name="Camargo L.E.A."/>
            <person name="Van Sluys M.A."/>
            <person name="Kitajima J.P."/>
            <person name="Truffi D."/>
            <person name="do Amaral A.M."/>
            <person name="Harakava R."/>
            <person name="de Oliveira J.C.F."/>
            <person name="Wood D."/>
            <person name="de Oliveira M.C."/>
            <person name="Miyaki C.Y."/>
            <person name="Takita M.A."/>
            <person name="da Silva A.C.R."/>
            <person name="Furlan L.R."/>
            <person name="Carraro D.M."/>
            <person name="Camarotte G."/>
            <person name="Almeida N.F. Jr."/>
            <person name="Carrer H."/>
            <person name="Coutinho L.L."/>
            <person name="El-Dorry H.A."/>
            <person name="Ferro M.I.T."/>
            <person name="Gagliardi P.R."/>
            <person name="Giglioti E."/>
            <person name="Goldman M.H.S."/>
            <person name="Goldman G.H."/>
            <person name="Kimura E.T."/>
            <person name="Ferro E.S."/>
            <person name="Kuramae E.E."/>
            <person name="Lemos E.G.M."/>
            <person name="Lemos M.V.F."/>
            <person name="Mauro S.M.Z."/>
            <person name="Machado M.A."/>
            <person name="Marino C.L."/>
            <person name="Menck C.F."/>
            <person name="Nunes L.R."/>
            <person name="Oliveira R.C."/>
            <person name="Pereira G.G."/>
            <person name="Siqueira W."/>
            <person name="de Souza A.A."/>
            <person name="Tsai S.M."/>
            <person name="Zanca A.S."/>
            <person name="Simpson A.J.G."/>
            <person name="Brumbley S.M."/>
            <person name="Setubal J.C."/>
        </authorList>
    </citation>
    <scope>NUCLEOTIDE SEQUENCE [LARGE SCALE GENOMIC DNA]</scope>
    <source>
        <strain>CTCB07</strain>
    </source>
</reference>
<evidence type="ECO:0000255" key="1">
    <source>
        <dbReference type="HAMAP-Rule" id="MF_00158"/>
    </source>
</evidence>
<protein>
    <recommendedName>
        <fullName evidence="1">Pantothenate synthetase</fullName>
        <shortName evidence="1">PS</shortName>
        <ecNumber evidence="1">6.3.2.1</ecNumber>
    </recommendedName>
    <alternativeName>
        <fullName evidence="1">Pantoate--beta-alanine ligase</fullName>
    </alternativeName>
    <alternativeName>
        <fullName evidence="1">Pantoate-activating enzyme</fullName>
    </alternativeName>
</protein>
<comment type="function">
    <text evidence="1">Catalyzes the condensation of pantoate with beta-alanine in an ATP-dependent reaction via a pantoyl-adenylate intermediate.</text>
</comment>
<comment type="catalytic activity">
    <reaction evidence="1">
        <text>(R)-pantoate + beta-alanine + ATP = (R)-pantothenate + AMP + diphosphate + H(+)</text>
        <dbReference type="Rhea" id="RHEA:10912"/>
        <dbReference type="ChEBI" id="CHEBI:15378"/>
        <dbReference type="ChEBI" id="CHEBI:15980"/>
        <dbReference type="ChEBI" id="CHEBI:29032"/>
        <dbReference type="ChEBI" id="CHEBI:30616"/>
        <dbReference type="ChEBI" id="CHEBI:33019"/>
        <dbReference type="ChEBI" id="CHEBI:57966"/>
        <dbReference type="ChEBI" id="CHEBI:456215"/>
        <dbReference type="EC" id="6.3.2.1"/>
    </reaction>
</comment>
<comment type="pathway">
    <text evidence="1">Cofactor biosynthesis; (R)-pantothenate biosynthesis; (R)-pantothenate from (R)-pantoate and beta-alanine: step 1/1.</text>
</comment>
<comment type="subunit">
    <text evidence="1">Homodimer.</text>
</comment>
<comment type="subcellular location">
    <subcellularLocation>
        <location evidence="1">Cytoplasm</location>
    </subcellularLocation>
</comment>
<comment type="miscellaneous">
    <text evidence="1">The reaction proceeds by a bi uni uni bi ping pong mechanism.</text>
</comment>
<comment type="similarity">
    <text evidence="1">Belongs to the pantothenate synthetase family.</text>
</comment>
<proteinExistence type="inferred from homology"/>